<evidence type="ECO:0000250" key="1">
    <source>
        <dbReference type="UniProtKB" id="Q91453"/>
    </source>
</evidence>
<evidence type="ECO:0000250" key="2">
    <source>
        <dbReference type="UniProtKB" id="Q98989"/>
    </source>
</evidence>
<evidence type="ECO:0000255" key="3">
    <source>
        <dbReference type="PROSITE-ProRule" id="PRU00498"/>
    </source>
</evidence>
<evidence type="ECO:0000255" key="4">
    <source>
        <dbReference type="PROSITE-ProRule" id="PRU00548"/>
    </source>
</evidence>
<evidence type="ECO:0000269" key="5">
    <source>
    </source>
</evidence>
<evidence type="ECO:0000269" key="6">
    <source>
    </source>
</evidence>
<evidence type="ECO:0000303" key="7">
    <source>
    </source>
</evidence>
<evidence type="ECO:0000305" key="8"/>
<evidence type="ECO:0000305" key="9">
    <source>
    </source>
</evidence>
<evidence type="ECO:0000305" key="10">
    <source>
    </source>
</evidence>
<evidence type="ECO:0000305" key="11">
    <source>
    </source>
</evidence>
<evidence type="ECO:0000312" key="12">
    <source>
        <dbReference type="EMBL" id="AVI44916.1"/>
    </source>
</evidence>
<dbReference type="EMBL" id="MG053103">
    <property type="protein sequence ID" value="AVI44916.1"/>
    <property type="molecule type" value="mRNA"/>
</dbReference>
<dbReference type="SMR" id="A0A2P1BRQ0"/>
<dbReference type="GO" id="GO:0005576">
    <property type="term" value="C:extracellular region"/>
    <property type="evidence" value="ECO:0007669"/>
    <property type="project" value="UniProtKB-SubCell"/>
</dbReference>
<dbReference type="GO" id="GO:0090729">
    <property type="term" value="F:toxin activity"/>
    <property type="evidence" value="ECO:0007669"/>
    <property type="project" value="UniProtKB-KW"/>
</dbReference>
<dbReference type="GO" id="GO:0031640">
    <property type="term" value="P:killing of cells of another organism"/>
    <property type="evidence" value="ECO:0007669"/>
    <property type="project" value="UniProtKB-KW"/>
</dbReference>
<dbReference type="Gene3D" id="2.60.120.920">
    <property type="match status" value="1"/>
</dbReference>
<dbReference type="InterPro" id="IPR001870">
    <property type="entry name" value="B30.2/SPRY"/>
</dbReference>
<dbReference type="InterPro" id="IPR043136">
    <property type="entry name" value="B30.2/SPRY_sf"/>
</dbReference>
<dbReference type="InterPro" id="IPR013320">
    <property type="entry name" value="ConA-like_dom_sf"/>
</dbReference>
<dbReference type="InterPro" id="IPR052090">
    <property type="entry name" value="Cytolytic_pore-forming_toxin"/>
</dbReference>
<dbReference type="InterPro" id="IPR006574">
    <property type="entry name" value="PRY"/>
</dbReference>
<dbReference type="InterPro" id="IPR056072">
    <property type="entry name" value="SNTX_MACPF/CDC-like_dom"/>
</dbReference>
<dbReference type="InterPro" id="IPR048997">
    <property type="entry name" value="Stonustoxin-like_helical"/>
</dbReference>
<dbReference type="InterPro" id="IPR040581">
    <property type="entry name" value="Thioredoxin_11"/>
</dbReference>
<dbReference type="PANTHER" id="PTHR31594">
    <property type="entry name" value="AIG1-TYPE G DOMAIN-CONTAINING PROTEIN"/>
    <property type="match status" value="1"/>
</dbReference>
<dbReference type="PANTHER" id="PTHR31594:SF16">
    <property type="entry name" value="SI:CH211-281L24.3"/>
    <property type="match status" value="1"/>
</dbReference>
<dbReference type="Pfam" id="PF24674">
    <property type="entry name" value="MACPF_SNTX"/>
    <property type="match status" value="1"/>
</dbReference>
<dbReference type="Pfam" id="PF13765">
    <property type="entry name" value="PRY"/>
    <property type="match status" value="1"/>
</dbReference>
<dbReference type="Pfam" id="PF21109">
    <property type="entry name" value="Stonustoxin_helical"/>
    <property type="match status" value="1"/>
</dbReference>
<dbReference type="Pfam" id="PF18078">
    <property type="entry name" value="Thioredoxin_11"/>
    <property type="match status" value="1"/>
</dbReference>
<dbReference type="SMART" id="SM00589">
    <property type="entry name" value="PRY"/>
    <property type="match status" value="1"/>
</dbReference>
<dbReference type="SUPFAM" id="SSF49899">
    <property type="entry name" value="Concanavalin A-like lectins/glucanases"/>
    <property type="match status" value="1"/>
</dbReference>
<dbReference type="PROSITE" id="PS50188">
    <property type="entry name" value="B302_SPRY"/>
    <property type="match status" value="1"/>
</dbReference>
<protein>
    <recommendedName>
        <fullName evidence="12">Cytolytic toxin-alpha</fullName>
        <shortName evidence="7">Sp-CTx-alpha</shortName>
    </recommendedName>
</protein>
<feature type="initiator methionine" description="Removed" evidence="1">
    <location>
        <position position="1"/>
    </location>
</feature>
<feature type="chain" id="PRO_0000451467" description="Cytolytic toxin-alpha" evidence="11">
    <location>
        <begin position="2"/>
        <end position="702"/>
    </location>
</feature>
<feature type="domain" description="B30.2/SPRY" evidence="4">
    <location>
        <begin position="505"/>
        <end position="702"/>
    </location>
</feature>
<feature type="region of interest" description="Structural MACPF/CDC pore-forming domain" evidence="2">
    <location>
        <begin position="2"/>
        <end position="265"/>
    </location>
</feature>
<feature type="region of interest" description="Structural FAT domain" evidence="2">
    <location>
        <begin position="266"/>
        <end position="385"/>
    </location>
</feature>
<feature type="region of interest" description="Thioredoxin (THX) domain" evidence="2">
    <location>
        <begin position="386"/>
        <end position="513"/>
    </location>
</feature>
<feature type="glycosylation site" description="N-linked (GlcNAc...) asparagine" evidence="3">
    <location>
        <position position="93"/>
    </location>
</feature>
<feature type="glycosylation site" description="N-linked (GlcNAc...) asparagine" evidence="3">
    <location>
        <position position="100"/>
    </location>
</feature>
<feature type="glycosylation site" description="N-linked (GlcNAc...) asparagine" evidence="3">
    <location>
        <position position="201"/>
    </location>
</feature>
<feature type="glycosylation site" description="N-linked (GlcNAc...) asparagine" evidence="3">
    <location>
        <position position="287"/>
    </location>
</feature>
<feature type="glycosylation site" description="N-linked (GlcNAc...) asparagine" evidence="3">
    <location>
        <position position="311"/>
    </location>
</feature>
<feature type="glycosylation site" description="N-linked (GlcNAc...) asparagine" evidence="3">
    <location>
        <position position="530"/>
    </location>
</feature>
<sequence>MSSDIIMAGLGRPFTLGFLYDARREKLIPGFSLFGDETLQKYATSTPQHSSDFQIVASDSVESKSNVMDIEASLGVSFLGGLVEVGGSAKYLNNTKKYQNQSRVTLQYKVTTTFKQFKAPPGKVNVQQTAISDKNVATHVVTAILFGANAFFVFDSDKVEDSNLQDIQGKMEAVIKKIPSVSIEGSGSVQLTDEEKSLASNLSCKFHGDFLLESLPTTFEEAVMTYQKLPELVGEEASDGVPMKVWLVPLTRFYSKADLLVRDISQGLVRKVHSILEDLHKLKRRANDSLEDDTVKLFPLLEKKLKNFQKNYSDYMTTFRRTISQKLQSIRKGDEDETAMLQLFEDRLRSPFNIDSLNMWMEITEREINVLRSCIDIIEETKHKAVLSQSQMVKDLLDSEVMHAVCYVFTYVTDKDHYLDALRDYLKSPNSRPARVRPVVTWVASNTVLETMREKAHLFRSLAKDMENRCVHFLVASIVNLKVEGAAIHYYRESVLIEPNFKHPIISAVEKIVDRRDLLWYDCELTLDPNTSHPSLYLSEGNKKAVTGTLRAFDNNPERFGLWQQVLCNKGLSRRHYWEVEWNGYVIVGVTYSSIGRKNIDIQSFIGFSETSWTLMFIPKNGVAVKGARRSVSYYFISDLAFPPLGLYHDCHASTLSFYKVSDNVLNHFHTIEIKPKLSEPVYAIIRIGDEDRPYHGTVRLL</sequence>
<reference key="1">
    <citation type="journal article" date="2018" name="J. Venom. Anim. Toxins Incl. Trop. Dis.">
        <title>Sequence analysis of the cDNA encoding for SpCTx: a lethal factor from scorpionfish venom (Scorpaena plumieri).</title>
        <authorList>
            <person name="Costa F.L.S."/>
            <person name="De Lima M.E."/>
            <person name="Figueiredo S.G."/>
            <person name="Ferreira R.S."/>
            <person name="Prates N.S."/>
            <person name="Sakamoto T."/>
            <person name="Salas C.E."/>
        </authorList>
    </citation>
    <scope>NUCLEOTIDE SEQUENCE [MRNA]</scope>
    <scope>3D-STRUCTURE MODELING</scope>
    <source>
        <tissue>Venom gland</tissue>
    </source>
</reference>
<reference key="2">
    <citation type="journal article" date="2013" name="Toxicon">
        <title>Molecular and biochemical characterization of a cytolysin from the Scorpaena plumieri (scorpionfish) venom: evidence of pore formation on erythrocyte cell membrane.</title>
        <authorList>
            <person name="Gomes H.L."/>
            <person name="Andrich F."/>
            <person name="Fortes-Dias C.L."/>
            <person name="Perales J."/>
            <person name="Teixeira-Ferreira A."/>
            <person name="Vassallo D.V."/>
            <person name="Cruz J.S."/>
            <person name="Figueiredo S.G."/>
        </authorList>
    </citation>
    <scope>FUNCTION</scope>
    <scope>IDENTIFICATION BY MASS SPECTROMETRY</scope>
    <source>
        <tissue>Venom</tissue>
    </source>
</reference>
<reference key="3">
    <citation type="journal article" date="2010" name="Toxicon">
        <title>A potent vasoactive cytolysin isolated from Scorpaena plumieri scorpionfish venom.</title>
        <authorList>
            <person name="Andrich F."/>
            <person name="Carnielli J.B."/>
            <person name="Cassoli J.S."/>
            <person name="Lautner R.Q."/>
            <person name="Santos R.A."/>
            <person name="Pimenta A.M."/>
            <person name="de Lima M.E."/>
            <person name="Figueiredo S.G."/>
        </authorList>
    </citation>
    <scope>FUNCTION</scope>
    <scope>SUBCELLULAR LOCATION</scope>
    <scope>SUBUNIT</scope>
    <scope>GLYCOSYLATION</scope>
    <source>
        <tissue>Venom</tissue>
    </source>
</reference>
<proteinExistence type="evidence at protein level"/>
<keyword id="KW-0204">Cytolysis</keyword>
<keyword id="KW-1015">Disulfide bond</keyword>
<keyword id="KW-0325">Glycoprotein</keyword>
<keyword id="KW-0354">Hemolysis</keyword>
<keyword id="KW-1199">Hemostasis impairing toxin</keyword>
<keyword id="KW-0959">Myotoxin</keyword>
<keyword id="KW-0528">Neurotoxin</keyword>
<keyword id="KW-1202">Platelet aggregation activating toxin</keyword>
<keyword id="KW-0964">Secreted</keyword>
<keyword id="KW-0800">Toxin</keyword>
<comment type="function">
    <text evidence="2 5 6">This heterodimer induces potent hemolytic activities (when tested on rabbit erythrocytes, EC(50)=25-56 ng/mL) due to its ability to form pores in the cell membrane (PubMed:20493199, PubMed:23933196). The pore may be composed of 10 alpha/beta heterodimers (By similarity). The toxin shows cardiovascular effects that include a vasorelaxant action that may involve the L-arginine-nitric oxid synthase pathway (PubMed:20493199). In addition, it displays edema-inducing activities, increases vascular permeability (By similarity). It also shows myotoxic activities and interferes irreversibly with neuromuscular function (By similarity). It also induces irreversible platelet aggregation in rabbit or rat (but not in human or mouse) whole blood (By similarity). In addition, it has been observed to increase spontaneous quantal acetylcholine release from isolated frog cutaneous pectoris motor endings (By similarity).</text>
</comment>
<comment type="subunit">
    <text evidence="5 6">Heterodimer of alpha and beta subunits (PubMed:20493199); non-covalently linked. Also associates into tetramers or even higher aggregates (PubMed:20493199, PubMed:23933196).</text>
</comment>
<comment type="subcellular location">
    <subcellularLocation>
        <location evidence="5 6">Secreted</location>
    </subcellularLocation>
</comment>
<comment type="tissue specificity">
    <text evidence="9 10">Expressed by the venom gland.</text>
</comment>
<comment type="domain">
    <text evidence="2">The first domain (residues 2-265) is structurally homologous to the membrane attack complex-ferforin/cholesterol-dependent cytolysin (MACPF/CDC) pore-forming domain. It makes numerous contacts with the FAT domain and comprise essentially the core pore-forming machinery.</text>
</comment>
<comment type="domain">
    <text evidence="2">The second domain is structurally homologous to the focal adhesion-targeting (FAT) domain (266-385). It makes numerous in cis contacts with the MACPF/CDC domain (first domain) and the thioredoxin (THX) domain (third domain) as well as extensive in trans interactions at the SNTX-alpha/beta interface.</text>
</comment>
<comment type="domain">
    <text evidence="2">The third domain corresponds to the thioredoxin (THX) domain. It makes numerous contacts with the second domain (FAT domain). Since it lacks the canonical catalytic residues, it may only play a purely structural role.</text>
</comment>
<comment type="domain">
    <text evidence="2">The fourth domain corresponds to the B30.2/SPRY domain. This domain would be responsible for initial interaction with the cell surface through either lipid- or protein-mediated interactions.</text>
</comment>
<comment type="PTM">
    <text evidence="2">Intrachain disulfide bonds may be present in the heterodimer.</text>
</comment>
<comment type="similarity">
    <text evidence="8">Belongs to the SNTX/VTX toxin family.</text>
</comment>
<organism>
    <name type="scientific">Scorpaena plumieri</name>
    <name type="common">Spotted scorpionfish</name>
    <dbReference type="NCBI Taxonomy" id="274700"/>
    <lineage>
        <taxon>Eukaryota</taxon>
        <taxon>Metazoa</taxon>
        <taxon>Chordata</taxon>
        <taxon>Craniata</taxon>
        <taxon>Vertebrata</taxon>
        <taxon>Euteleostomi</taxon>
        <taxon>Actinopterygii</taxon>
        <taxon>Neopterygii</taxon>
        <taxon>Teleostei</taxon>
        <taxon>Neoteleostei</taxon>
        <taxon>Acanthomorphata</taxon>
        <taxon>Eupercaria</taxon>
        <taxon>Perciformes</taxon>
        <taxon>Scorpaenoidei</taxon>
        <taxon>Scorpaenidae</taxon>
        <taxon>Scorpaeninae</taxon>
        <taxon>Scorpaena</taxon>
    </lineage>
</organism>
<accession>A0A2P1BRQ0</accession>
<name>CTXA_SCOPL</name>